<organism>
    <name type="scientific">Streptococcus pyogenes serotype M5 (strain Manfredo)</name>
    <dbReference type="NCBI Taxonomy" id="160491"/>
    <lineage>
        <taxon>Bacteria</taxon>
        <taxon>Bacillati</taxon>
        <taxon>Bacillota</taxon>
        <taxon>Bacilli</taxon>
        <taxon>Lactobacillales</taxon>
        <taxon>Streptococcaceae</taxon>
        <taxon>Streptococcus</taxon>
    </lineage>
</organism>
<sequence>MSKKRLHEIAKEIGKSSKEVVEHAKYLGLDVKSHASSVEEADAKKIISSFSKASKPDVTASQAVKPKEVAQPSVTVVKETGSEHVEKTQVSKPKSRNFKAEREARAKEQAARKQANGSSHRSQERRGGYRQPNNHQTNEQGDKRITHRSQGDTNDKRIERKASNVSPRHDNHQLVGDRNRSFAKENHKNGRFTNQKKQGRQEPQSKSPKIDFKARAAALKAEQNAEYSRQSETRFRAQQEAKRLAELARQEAKEAALKAQAEEMSHREAALKSIEEAETKLKSSNISAKSTADNRRKKQARPEKNRELTHHSQEGQKKNKKSWNSQNQVRNQKNSNWNKNKKTKKGKNVKNTNTAPKPVTERKFHELPKEFEYTEGMTVAEIAKRIKREPAEIVKKLFMMGVMATQNQSLDGDTIELLMVDYGIEAKAKVEVDDADIERFFEDENYLNPENIVERAPVVTIMGHVDHGKTTLLDTLRNSRVATGEAGGITQHIGAYQIEEAGKKITFLDTPGHAAFTSMRARGASVTDITILIVAADDGVMPQTIEAINHSKAAGVPIIVAINKIDKPGANPERVIAELAEYGIISTAWGGECEFVEISAKFNKNIDELLETVLLVAEVEELKADPTVRAIGTVIEARLDKGKGAIATLLVQQGTLHVQDPIVVGNTFGRVRAMVNDLGRRVKSAEPSTPVSITGLNETPMAGDHFAVYADEKAARAAGEERSKRALLKQRQNTQRVSLDNLFDTLKAGEIKTVNVIIKADVQGSVEALAASLVKIEVEGVRVNVVHSAVGAINESDVTLAEASNAVIIGFNVRPTPQARQQADTDDVEIRLHSIIYKVIEEVEEAMKGKLDPVYQEKVLGEAIIRETFKVSKVGTIGGFMVINGKVTRDSSVRVIRDSVVIFDGKLASLKHYKDDVKEVGNAQEGGLMIENFNDLKVDDTIEAYIMEEIVRK</sequence>
<gene>
    <name evidence="2" type="primary">infB</name>
    <name type="ordered locus">SpyM50382</name>
</gene>
<dbReference type="EMBL" id="AM295007">
    <property type="protein sequence ID" value="CAM29724.1"/>
    <property type="molecule type" value="Genomic_DNA"/>
</dbReference>
<dbReference type="RefSeq" id="WP_011888646.1">
    <property type="nucleotide sequence ID" value="NC_009332.1"/>
</dbReference>
<dbReference type="SMR" id="A2RD01"/>
<dbReference type="KEGG" id="spf:SpyM50382"/>
<dbReference type="HOGENOM" id="CLU_006301_5_0_9"/>
<dbReference type="GO" id="GO:0005829">
    <property type="term" value="C:cytosol"/>
    <property type="evidence" value="ECO:0007669"/>
    <property type="project" value="TreeGrafter"/>
</dbReference>
<dbReference type="GO" id="GO:0005525">
    <property type="term" value="F:GTP binding"/>
    <property type="evidence" value="ECO:0007669"/>
    <property type="project" value="UniProtKB-KW"/>
</dbReference>
<dbReference type="GO" id="GO:0003924">
    <property type="term" value="F:GTPase activity"/>
    <property type="evidence" value="ECO:0007669"/>
    <property type="project" value="UniProtKB-UniRule"/>
</dbReference>
<dbReference type="GO" id="GO:0003743">
    <property type="term" value="F:translation initiation factor activity"/>
    <property type="evidence" value="ECO:0007669"/>
    <property type="project" value="UniProtKB-UniRule"/>
</dbReference>
<dbReference type="CDD" id="cd01887">
    <property type="entry name" value="IF2_eIF5B"/>
    <property type="match status" value="1"/>
</dbReference>
<dbReference type="CDD" id="cd03702">
    <property type="entry name" value="IF2_mtIF2_II"/>
    <property type="match status" value="1"/>
</dbReference>
<dbReference type="CDD" id="cd03692">
    <property type="entry name" value="mtIF2_IVc"/>
    <property type="match status" value="1"/>
</dbReference>
<dbReference type="FunFam" id="2.40.30.10:FF:000007">
    <property type="entry name" value="Translation initiation factor IF-2"/>
    <property type="match status" value="1"/>
</dbReference>
<dbReference type="FunFam" id="2.40.30.10:FF:000008">
    <property type="entry name" value="Translation initiation factor IF-2"/>
    <property type="match status" value="1"/>
</dbReference>
<dbReference type="FunFam" id="3.40.50.10050:FF:000001">
    <property type="entry name" value="Translation initiation factor IF-2"/>
    <property type="match status" value="1"/>
</dbReference>
<dbReference type="FunFam" id="3.40.50.300:FF:000019">
    <property type="entry name" value="Translation initiation factor IF-2"/>
    <property type="match status" value="1"/>
</dbReference>
<dbReference type="Gene3D" id="1.10.10.2480">
    <property type="match status" value="1"/>
</dbReference>
<dbReference type="Gene3D" id="3.40.50.300">
    <property type="entry name" value="P-loop containing nucleotide triphosphate hydrolases"/>
    <property type="match status" value="1"/>
</dbReference>
<dbReference type="Gene3D" id="2.40.30.10">
    <property type="entry name" value="Translation factors"/>
    <property type="match status" value="2"/>
</dbReference>
<dbReference type="Gene3D" id="3.40.50.10050">
    <property type="entry name" value="Translation initiation factor IF- 2, domain 3"/>
    <property type="match status" value="1"/>
</dbReference>
<dbReference type="HAMAP" id="MF_00100_B">
    <property type="entry name" value="IF_2_B"/>
    <property type="match status" value="1"/>
</dbReference>
<dbReference type="InterPro" id="IPR053905">
    <property type="entry name" value="EF-G-like_DII"/>
</dbReference>
<dbReference type="InterPro" id="IPR044145">
    <property type="entry name" value="IF2_II"/>
</dbReference>
<dbReference type="InterPro" id="IPR006847">
    <property type="entry name" value="IF2_N"/>
</dbReference>
<dbReference type="InterPro" id="IPR027417">
    <property type="entry name" value="P-loop_NTPase"/>
</dbReference>
<dbReference type="InterPro" id="IPR005225">
    <property type="entry name" value="Small_GTP-bd"/>
</dbReference>
<dbReference type="InterPro" id="IPR000795">
    <property type="entry name" value="T_Tr_GTP-bd_dom"/>
</dbReference>
<dbReference type="InterPro" id="IPR000178">
    <property type="entry name" value="TF_IF2_bacterial-like"/>
</dbReference>
<dbReference type="InterPro" id="IPR015760">
    <property type="entry name" value="TIF_IF2"/>
</dbReference>
<dbReference type="InterPro" id="IPR023115">
    <property type="entry name" value="TIF_IF2_dom3"/>
</dbReference>
<dbReference type="InterPro" id="IPR036925">
    <property type="entry name" value="TIF_IF2_dom3_sf"/>
</dbReference>
<dbReference type="InterPro" id="IPR009000">
    <property type="entry name" value="Transl_B-barrel_sf"/>
</dbReference>
<dbReference type="NCBIfam" id="TIGR00487">
    <property type="entry name" value="IF-2"/>
    <property type="match status" value="1"/>
</dbReference>
<dbReference type="NCBIfam" id="TIGR00231">
    <property type="entry name" value="small_GTP"/>
    <property type="match status" value="1"/>
</dbReference>
<dbReference type="PANTHER" id="PTHR43381:SF5">
    <property type="entry name" value="TR-TYPE G DOMAIN-CONTAINING PROTEIN"/>
    <property type="match status" value="1"/>
</dbReference>
<dbReference type="PANTHER" id="PTHR43381">
    <property type="entry name" value="TRANSLATION INITIATION FACTOR IF-2-RELATED"/>
    <property type="match status" value="1"/>
</dbReference>
<dbReference type="Pfam" id="PF22042">
    <property type="entry name" value="EF-G_D2"/>
    <property type="match status" value="1"/>
</dbReference>
<dbReference type="Pfam" id="PF00009">
    <property type="entry name" value="GTP_EFTU"/>
    <property type="match status" value="1"/>
</dbReference>
<dbReference type="Pfam" id="PF11987">
    <property type="entry name" value="IF-2"/>
    <property type="match status" value="1"/>
</dbReference>
<dbReference type="Pfam" id="PF04760">
    <property type="entry name" value="IF2_N"/>
    <property type="match status" value="2"/>
</dbReference>
<dbReference type="PRINTS" id="PR00449">
    <property type="entry name" value="RASTRNSFRMNG"/>
</dbReference>
<dbReference type="SUPFAM" id="SSF52156">
    <property type="entry name" value="Initiation factor IF2/eIF5b, domain 3"/>
    <property type="match status" value="1"/>
</dbReference>
<dbReference type="SUPFAM" id="SSF52540">
    <property type="entry name" value="P-loop containing nucleoside triphosphate hydrolases"/>
    <property type="match status" value="1"/>
</dbReference>
<dbReference type="SUPFAM" id="SSF50447">
    <property type="entry name" value="Translation proteins"/>
    <property type="match status" value="2"/>
</dbReference>
<dbReference type="PROSITE" id="PS51722">
    <property type="entry name" value="G_TR_2"/>
    <property type="match status" value="1"/>
</dbReference>
<dbReference type="PROSITE" id="PS01176">
    <property type="entry name" value="IF2"/>
    <property type="match status" value="1"/>
</dbReference>
<proteinExistence type="inferred from homology"/>
<keyword id="KW-0963">Cytoplasm</keyword>
<keyword id="KW-0342">GTP-binding</keyword>
<keyword id="KW-0396">Initiation factor</keyword>
<keyword id="KW-0547">Nucleotide-binding</keyword>
<keyword id="KW-0648">Protein biosynthesis</keyword>
<name>IF2_STRPG</name>
<comment type="function">
    <text evidence="2">One of the essential components for the initiation of protein synthesis. Protects formylmethionyl-tRNA from spontaneous hydrolysis and promotes its binding to the 30S ribosomal subunits. Also involved in the hydrolysis of GTP during the formation of the 70S ribosomal complex.</text>
</comment>
<comment type="subcellular location">
    <subcellularLocation>
        <location evidence="2">Cytoplasm</location>
    </subcellularLocation>
</comment>
<comment type="similarity">
    <text evidence="2">Belongs to the TRAFAC class translation factor GTPase superfamily. Classic translation factor GTPase family. IF-2 subfamily.</text>
</comment>
<accession>A2RD01</accession>
<evidence type="ECO:0000250" key="1"/>
<evidence type="ECO:0000255" key="2">
    <source>
        <dbReference type="HAMAP-Rule" id="MF_00100"/>
    </source>
</evidence>
<evidence type="ECO:0000256" key="3">
    <source>
        <dbReference type="SAM" id="MobiDB-lite"/>
    </source>
</evidence>
<protein>
    <recommendedName>
        <fullName evidence="2">Translation initiation factor IF-2</fullName>
    </recommendedName>
</protein>
<feature type="chain" id="PRO_1000008353" description="Translation initiation factor IF-2">
    <location>
        <begin position="1"/>
        <end position="953"/>
    </location>
</feature>
<feature type="domain" description="tr-type G">
    <location>
        <begin position="454"/>
        <end position="623"/>
    </location>
</feature>
<feature type="region of interest" description="Disordered" evidence="3">
    <location>
        <begin position="52"/>
        <end position="247"/>
    </location>
</feature>
<feature type="region of interest" description="Disordered" evidence="3">
    <location>
        <begin position="279"/>
        <end position="363"/>
    </location>
</feature>
<feature type="region of interest" description="G1" evidence="1">
    <location>
        <begin position="463"/>
        <end position="470"/>
    </location>
</feature>
<feature type="region of interest" description="G2" evidence="1">
    <location>
        <begin position="488"/>
        <end position="492"/>
    </location>
</feature>
<feature type="region of interest" description="G3" evidence="1">
    <location>
        <begin position="509"/>
        <end position="512"/>
    </location>
</feature>
<feature type="region of interest" description="G4" evidence="1">
    <location>
        <begin position="563"/>
        <end position="566"/>
    </location>
</feature>
<feature type="region of interest" description="G5" evidence="1">
    <location>
        <begin position="599"/>
        <end position="601"/>
    </location>
</feature>
<feature type="compositionally biased region" description="Basic and acidic residues" evidence="3">
    <location>
        <begin position="80"/>
        <end position="89"/>
    </location>
</feature>
<feature type="compositionally biased region" description="Basic and acidic residues" evidence="3">
    <location>
        <begin position="98"/>
        <end position="111"/>
    </location>
</feature>
<feature type="compositionally biased region" description="Basic and acidic residues" evidence="3">
    <location>
        <begin position="140"/>
        <end position="188"/>
    </location>
</feature>
<feature type="compositionally biased region" description="Polar residues" evidence="3">
    <location>
        <begin position="191"/>
        <end position="207"/>
    </location>
</feature>
<feature type="compositionally biased region" description="Basic and acidic residues" evidence="3">
    <location>
        <begin position="229"/>
        <end position="247"/>
    </location>
</feature>
<feature type="compositionally biased region" description="Polar residues" evidence="3">
    <location>
        <begin position="282"/>
        <end position="291"/>
    </location>
</feature>
<feature type="compositionally biased region" description="Basic and acidic residues" evidence="3">
    <location>
        <begin position="300"/>
        <end position="317"/>
    </location>
</feature>
<feature type="compositionally biased region" description="Low complexity" evidence="3">
    <location>
        <begin position="322"/>
        <end position="338"/>
    </location>
</feature>
<feature type="compositionally biased region" description="Basic residues" evidence="3">
    <location>
        <begin position="339"/>
        <end position="348"/>
    </location>
</feature>
<feature type="binding site" evidence="2">
    <location>
        <begin position="463"/>
        <end position="470"/>
    </location>
    <ligand>
        <name>GTP</name>
        <dbReference type="ChEBI" id="CHEBI:37565"/>
    </ligand>
</feature>
<feature type="binding site" evidence="2">
    <location>
        <begin position="509"/>
        <end position="513"/>
    </location>
    <ligand>
        <name>GTP</name>
        <dbReference type="ChEBI" id="CHEBI:37565"/>
    </ligand>
</feature>
<feature type="binding site" evidence="2">
    <location>
        <begin position="563"/>
        <end position="566"/>
    </location>
    <ligand>
        <name>GTP</name>
        <dbReference type="ChEBI" id="CHEBI:37565"/>
    </ligand>
</feature>
<reference key="1">
    <citation type="journal article" date="2007" name="J. Bacteriol.">
        <title>Complete genome of acute rheumatic fever-associated serotype M5 Streptococcus pyogenes strain Manfredo.</title>
        <authorList>
            <person name="Holden M.T.G."/>
            <person name="Scott A."/>
            <person name="Cherevach I."/>
            <person name="Chillingworth T."/>
            <person name="Churcher C."/>
            <person name="Cronin A."/>
            <person name="Dowd L."/>
            <person name="Feltwell T."/>
            <person name="Hamlin N."/>
            <person name="Holroyd S."/>
            <person name="Jagels K."/>
            <person name="Moule S."/>
            <person name="Mungall K."/>
            <person name="Quail M.A."/>
            <person name="Price C."/>
            <person name="Rabbinowitsch E."/>
            <person name="Sharp S."/>
            <person name="Skelton J."/>
            <person name="Whitehead S."/>
            <person name="Barrell B.G."/>
            <person name="Kehoe M."/>
            <person name="Parkhill J."/>
        </authorList>
    </citation>
    <scope>NUCLEOTIDE SEQUENCE [LARGE SCALE GENOMIC DNA]</scope>
    <source>
        <strain>Manfredo</strain>
    </source>
</reference>